<comment type="catalytic activity">
    <reaction>
        <text>L-glutamate + NAD(+) + H2O = 2-oxoglutarate + NH4(+) + NADH + H(+)</text>
        <dbReference type="Rhea" id="RHEA:15133"/>
        <dbReference type="ChEBI" id="CHEBI:15377"/>
        <dbReference type="ChEBI" id="CHEBI:15378"/>
        <dbReference type="ChEBI" id="CHEBI:16810"/>
        <dbReference type="ChEBI" id="CHEBI:28938"/>
        <dbReference type="ChEBI" id="CHEBI:29985"/>
        <dbReference type="ChEBI" id="CHEBI:57540"/>
        <dbReference type="ChEBI" id="CHEBI:57945"/>
        <dbReference type="EC" id="1.4.1.2"/>
    </reaction>
</comment>
<comment type="subunit">
    <text evidence="1">Homohexamer.</text>
</comment>
<comment type="similarity">
    <text evidence="3">Belongs to the Glu/Leu/Phe/Val dehydrogenases family.</text>
</comment>
<protein>
    <recommendedName>
        <fullName>NAD-specific glutamate dehydrogenase</fullName>
        <shortName>NAD-GDH</shortName>
        <ecNumber>1.4.1.2</ecNumber>
    </recommendedName>
</protein>
<proteinExistence type="inferred from homology"/>
<organism>
    <name type="scientific">Clostridioides difficile</name>
    <name type="common">Peptoclostridium difficile</name>
    <dbReference type="NCBI Taxonomy" id="1496"/>
    <lineage>
        <taxon>Bacteria</taxon>
        <taxon>Bacillati</taxon>
        <taxon>Bacillota</taxon>
        <taxon>Clostridia</taxon>
        <taxon>Peptostreptococcales</taxon>
        <taxon>Peptostreptococcaceae</taxon>
        <taxon>Clostridioides</taxon>
    </lineage>
</organism>
<evidence type="ECO:0000250" key="1"/>
<evidence type="ECO:0000255" key="2">
    <source>
        <dbReference type="PROSITE-ProRule" id="PRU10011"/>
    </source>
</evidence>
<evidence type="ECO:0000305" key="3"/>
<sequence>MSGKDVNVFEMAQSQVKNACDKLGMEPAVYELLKEPMRVIEVSIPVKMDDGSIKTFKGFRSQHNDAVGPTKGGIRFHQNVSRDEVKALSIWMTFKCSVTGIPYGGGKGGIIVDPSTLSQGELERLSRGYIDGIYKLIGEKVDVPAPDVNTNGQIMSWMVDEYNKLTGQSSIGVITGKPVEFGGSLGRTAATGFGVAVTAREAAAKLGIDMKKAKIAVQGIGNVGSYTVLNCEKLGGTVVAMAEWCKSEGSYAIYNENGLDGQAMLDYMKEHGNLLNFPGAKRISLEEFWASDVDIVIPAALENSITKEVAESIKAKLVCEAANGPTTPEADEVFAERGIVLTPDILTNAGGVTVSYFEWVQNLYGYYWSEEEVEQKEEIAMVKAFESIWKIKEEYNVTMREAAYMHSIKKVAEAMKLRGWY</sequence>
<reference key="1">
    <citation type="journal article" date="1991" name="J. Clin. Microbiol.">
        <title>Identification of the latex test-reactive protein of Clostridium difficile as glutamate dehydrogenase.</title>
        <authorList>
            <person name="Lyerly D.M."/>
            <person name="Barroso L.A."/>
            <person name="Wilkins T.D."/>
        </authorList>
    </citation>
    <scope>NUCLEOTIDE SEQUENCE [GENOMIC DNA]</scope>
</reference>
<accession>P27346</accession>
<gene>
    <name type="primary">gluD</name>
</gene>
<dbReference type="EC" id="1.4.1.2"/>
<dbReference type="EMBL" id="M65250">
    <property type="protein sequence ID" value="AAA62756.1"/>
    <property type="molecule type" value="Genomic_DNA"/>
</dbReference>
<dbReference type="PIR" id="S28829">
    <property type="entry name" value="S28829"/>
</dbReference>
<dbReference type="RefSeq" id="WP_003420866.1">
    <property type="nucleotide sequence ID" value="NZ_WUUI01000006.1"/>
</dbReference>
<dbReference type="SMR" id="P27346"/>
<dbReference type="GeneID" id="66352729"/>
<dbReference type="OMA" id="MIMGWMM"/>
<dbReference type="BRENDA" id="1.4.1.2">
    <property type="organism ID" value="1473"/>
</dbReference>
<dbReference type="GO" id="GO:0004352">
    <property type="term" value="F:glutamate dehydrogenase (NAD+) activity"/>
    <property type="evidence" value="ECO:0000250"/>
    <property type="project" value="UniProtKB"/>
</dbReference>
<dbReference type="GO" id="GO:0006520">
    <property type="term" value="P:amino acid metabolic process"/>
    <property type="evidence" value="ECO:0000250"/>
    <property type="project" value="UniProtKB"/>
</dbReference>
<dbReference type="GO" id="GO:0006538">
    <property type="term" value="P:glutamate catabolic process"/>
    <property type="evidence" value="ECO:0007669"/>
    <property type="project" value="TreeGrafter"/>
</dbReference>
<dbReference type="CDD" id="cd01076">
    <property type="entry name" value="NAD_bind_1_Glu_DH"/>
    <property type="match status" value="1"/>
</dbReference>
<dbReference type="FunFam" id="3.40.50.10860:FF:000003">
    <property type="entry name" value="Glutamate dehydrogenase"/>
    <property type="match status" value="1"/>
</dbReference>
<dbReference type="FunFam" id="3.40.50.720:FF:000212">
    <property type="entry name" value="Glutamate dehydrogenase"/>
    <property type="match status" value="1"/>
</dbReference>
<dbReference type="Gene3D" id="3.40.50.10860">
    <property type="entry name" value="Leucine Dehydrogenase, chain A, domain 1"/>
    <property type="match status" value="1"/>
</dbReference>
<dbReference type="Gene3D" id="3.40.50.720">
    <property type="entry name" value="NAD(P)-binding Rossmann-like Domain"/>
    <property type="match status" value="1"/>
</dbReference>
<dbReference type="InterPro" id="IPR046346">
    <property type="entry name" value="Aminoacid_DH-like_N_sf"/>
</dbReference>
<dbReference type="InterPro" id="IPR006095">
    <property type="entry name" value="Glu/Leu/Phe/Val/Trp_DH"/>
</dbReference>
<dbReference type="InterPro" id="IPR006096">
    <property type="entry name" value="Glu/Leu/Phe/Val/Trp_DH_C"/>
</dbReference>
<dbReference type="InterPro" id="IPR006097">
    <property type="entry name" value="Glu/Leu/Phe/Val/Trp_DH_dimer"/>
</dbReference>
<dbReference type="InterPro" id="IPR033524">
    <property type="entry name" value="Glu/Leu/Phe/Val_DH_AS"/>
</dbReference>
<dbReference type="InterPro" id="IPR014362">
    <property type="entry name" value="Glu_DH"/>
</dbReference>
<dbReference type="InterPro" id="IPR036291">
    <property type="entry name" value="NAD(P)-bd_dom_sf"/>
</dbReference>
<dbReference type="InterPro" id="IPR033922">
    <property type="entry name" value="NAD_bind_Glu_DH"/>
</dbReference>
<dbReference type="PANTHER" id="PTHR11606">
    <property type="entry name" value="GLUTAMATE DEHYDROGENASE"/>
    <property type="match status" value="1"/>
</dbReference>
<dbReference type="PANTHER" id="PTHR11606:SF13">
    <property type="entry name" value="GLUTAMATE DEHYDROGENASE 1, MITOCHONDRIAL"/>
    <property type="match status" value="1"/>
</dbReference>
<dbReference type="Pfam" id="PF00208">
    <property type="entry name" value="ELFV_dehydrog"/>
    <property type="match status" value="1"/>
</dbReference>
<dbReference type="Pfam" id="PF02812">
    <property type="entry name" value="ELFV_dehydrog_N"/>
    <property type="match status" value="1"/>
</dbReference>
<dbReference type="PIRSF" id="PIRSF000185">
    <property type="entry name" value="Glu_DH"/>
    <property type="match status" value="1"/>
</dbReference>
<dbReference type="PRINTS" id="PR00082">
    <property type="entry name" value="GLFDHDRGNASE"/>
</dbReference>
<dbReference type="SMART" id="SM00839">
    <property type="entry name" value="ELFV_dehydrog"/>
    <property type="match status" value="1"/>
</dbReference>
<dbReference type="SUPFAM" id="SSF53223">
    <property type="entry name" value="Aminoacid dehydrogenase-like, N-terminal domain"/>
    <property type="match status" value="1"/>
</dbReference>
<dbReference type="SUPFAM" id="SSF51735">
    <property type="entry name" value="NAD(P)-binding Rossmann-fold domains"/>
    <property type="match status" value="1"/>
</dbReference>
<dbReference type="PROSITE" id="PS00074">
    <property type="entry name" value="GLFV_DEHYDROGENASE"/>
    <property type="match status" value="1"/>
</dbReference>
<feature type="chain" id="PRO_0000182737" description="NAD-specific glutamate dehydrogenase">
    <location>
        <begin position="1"/>
        <end position="421"/>
    </location>
</feature>
<feature type="active site" description="Proton donor" evidence="2">
    <location>
        <position position="107"/>
    </location>
</feature>
<feature type="binding site" evidence="1">
    <location>
        <position position="71"/>
    </location>
    <ligand>
        <name>substrate</name>
    </ligand>
</feature>
<feature type="binding site" evidence="1">
    <location>
        <position position="95"/>
    </location>
    <ligand>
        <name>substrate</name>
    </ligand>
</feature>
<feature type="binding site" evidence="1">
    <location>
        <position position="191"/>
    </location>
    <ligand>
        <name>NAD(+)</name>
        <dbReference type="ChEBI" id="CHEBI:57540"/>
    </ligand>
</feature>
<feature type="binding site" evidence="1">
    <location>
        <position position="222"/>
    </location>
    <ligand>
        <name>NAD(+)</name>
        <dbReference type="ChEBI" id="CHEBI:57540"/>
    </ligand>
</feature>
<feature type="binding site" evidence="1">
    <location>
        <position position="355"/>
    </location>
    <ligand>
        <name>substrate</name>
    </ligand>
</feature>
<feature type="site" description="Important for catalysis" evidence="1">
    <location>
        <position position="147"/>
    </location>
</feature>
<keyword id="KW-0520">NAD</keyword>
<keyword id="KW-0560">Oxidoreductase</keyword>
<name>DHE2_CLODI</name>